<proteinExistence type="inferred from homology"/>
<feature type="chain" id="PRO_0000156870" description="UPF0179 protein MJ1627">
    <location>
        <begin position="1"/>
        <end position="151"/>
    </location>
</feature>
<gene>
    <name type="ordered locus">MJ1627</name>
</gene>
<sequence>MSKESKITLIGSKLAKTGGEFIYLGEIEECKNCKFKRLCHGNLEVGRKYKIVSVRSANHPCIVHEGGVKVVEVVLADLTIMIESKKALEGVVLNHEPITCDNFDCEYYSFCNSEGIKEGEKYKIKQVLNEKINCPFGNSLKKVIVELVENK</sequence>
<dbReference type="EMBL" id="L77117">
    <property type="protein sequence ID" value="AAB99644.1"/>
    <property type="molecule type" value="Genomic_DNA"/>
</dbReference>
<dbReference type="PIR" id="A64503">
    <property type="entry name" value="A64503"/>
</dbReference>
<dbReference type="RefSeq" id="WP_010871151.1">
    <property type="nucleotide sequence ID" value="NC_000909.1"/>
</dbReference>
<dbReference type="FunCoup" id="Q59021">
    <property type="interactions" value="2"/>
</dbReference>
<dbReference type="STRING" id="243232.MJ_1627"/>
<dbReference type="PaxDb" id="243232-MJ_1627"/>
<dbReference type="EnsemblBacteria" id="AAB99644">
    <property type="protein sequence ID" value="AAB99644"/>
    <property type="gene ID" value="MJ_1627"/>
</dbReference>
<dbReference type="GeneID" id="1452536"/>
<dbReference type="KEGG" id="mja:MJ_1627"/>
<dbReference type="eggNOG" id="arCOG04477">
    <property type="taxonomic scope" value="Archaea"/>
</dbReference>
<dbReference type="HOGENOM" id="CLU_121764_0_0_2"/>
<dbReference type="InParanoid" id="Q59021"/>
<dbReference type="OrthoDB" id="24613at2157"/>
<dbReference type="PhylomeDB" id="Q59021"/>
<dbReference type="Proteomes" id="UP000000805">
    <property type="component" value="Chromosome"/>
</dbReference>
<dbReference type="HAMAP" id="MF_00498">
    <property type="entry name" value="UPF0179"/>
    <property type="match status" value="1"/>
</dbReference>
<dbReference type="InterPro" id="IPR005369">
    <property type="entry name" value="UPF0179"/>
</dbReference>
<dbReference type="PANTHER" id="PTHR40699">
    <property type="entry name" value="UPF0179 PROTEIN MJ1627"/>
    <property type="match status" value="1"/>
</dbReference>
<dbReference type="PANTHER" id="PTHR40699:SF1">
    <property type="entry name" value="UPF0179 PROTEIN MJ1627"/>
    <property type="match status" value="1"/>
</dbReference>
<dbReference type="Pfam" id="PF03684">
    <property type="entry name" value="UPF0179"/>
    <property type="match status" value="1"/>
</dbReference>
<dbReference type="PIRSF" id="PIRSF006595">
    <property type="entry name" value="UCP006595"/>
    <property type="match status" value="1"/>
</dbReference>
<reference key="1">
    <citation type="journal article" date="1996" name="Science">
        <title>Complete genome sequence of the methanogenic archaeon, Methanococcus jannaschii.</title>
        <authorList>
            <person name="Bult C.J."/>
            <person name="White O."/>
            <person name="Olsen G.J."/>
            <person name="Zhou L."/>
            <person name="Fleischmann R.D."/>
            <person name="Sutton G.G."/>
            <person name="Blake J.A."/>
            <person name="FitzGerald L.M."/>
            <person name="Clayton R.A."/>
            <person name="Gocayne J.D."/>
            <person name="Kerlavage A.R."/>
            <person name="Dougherty B.A."/>
            <person name="Tomb J.-F."/>
            <person name="Adams M.D."/>
            <person name="Reich C.I."/>
            <person name="Overbeek R."/>
            <person name="Kirkness E.F."/>
            <person name="Weinstock K.G."/>
            <person name="Merrick J.M."/>
            <person name="Glodek A."/>
            <person name="Scott J.L."/>
            <person name="Geoghagen N.S.M."/>
            <person name="Weidman J.F."/>
            <person name="Fuhrmann J.L."/>
            <person name="Nguyen D."/>
            <person name="Utterback T.R."/>
            <person name="Kelley J.M."/>
            <person name="Peterson J.D."/>
            <person name="Sadow P.W."/>
            <person name="Hanna M.C."/>
            <person name="Cotton M.D."/>
            <person name="Roberts K.M."/>
            <person name="Hurst M.A."/>
            <person name="Kaine B.P."/>
            <person name="Borodovsky M."/>
            <person name="Klenk H.-P."/>
            <person name="Fraser C.M."/>
            <person name="Smith H.O."/>
            <person name="Woese C.R."/>
            <person name="Venter J.C."/>
        </authorList>
    </citation>
    <scope>NUCLEOTIDE SEQUENCE [LARGE SCALE GENOMIC DNA]</scope>
    <source>
        <strain>ATCC 43067 / DSM 2661 / JAL-1 / JCM 10045 / NBRC 100440</strain>
    </source>
</reference>
<name>Y1627_METJA</name>
<protein>
    <recommendedName>
        <fullName>UPF0179 protein MJ1627</fullName>
    </recommendedName>
</protein>
<comment type="similarity">
    <text evidence="1">Belongs to the UPF0179 family.</text>
</comment>
<evidence type="ECO:0000305" key="1"/>
<organism>
    <name type="scientific">Methanocaldococcus jannaschii (strain ATCC 43067 / DSM 2661 / JAL-1 / JCM 10045 / NBRC 100440)</name>
    <name type="common">Methanococcus jannaschii</name>
    <dbReference type="NCBI Taxonomy" id="243232"/>
    <lineage>
        <taxon>Archaea</taxon>
        <taxon>Methanobacteriati</taxon>
        <taxon>Methanobacteriota</taxon>
        <taxon>Methanomada group</taxon>
        <taxon>Methanococci</taxon>
        <taxon>Methanococcales</taxon>
        <taxon>Methanocaldococcaceae</taxon>
        <taxon>Methanocaldococcus</taxon>
    </lineage>
</organism>
<accession>Q59021</accession>
<keyword id="KW-1185">Reference proteome</keyword>